<gene>
    <name type="primary">ACA9</name>
    <name type="ordered locus">At3g21180</name>
    <name type="ORF">MXL8.3</name>
</gene>
<reference key="1">
    <citation type="journal article" date="2000" name="DNA Res.">
        <title>Structural analysis of Arabidopsis thaliana chromosome 3. I. Sequence features of the regions of 4,504,864 bp covered by sixty P1 and TAC clones.</title>
        <authorList>
            <person name="Sato S."/>
            <person name="Nakamura Y."/>
            <person name="Kaneko T."/>
            <person name="Katoh T."/>
            <person name="Asamizu E."/>
            <person name="Tabata S."/>
        </authorList>
    </citation>
    <scope>NUCLEOTIDE SEQUENCE [LARGE SCALE GENOMIC DNA]</scope>
    <source>
        <strain>cv. Columbia</strain>
    </source>
</reference>
<reference key="2">
    <citation type="journal article" date="2017" name="Plant J.">
        <title>Araport11: a complete reannotation of the Arabidopsis thaliana reference genome.</title>
        <authorList>
            <person name="Cheng C.Y."/>
            <person name="Krishnakumar V."/>
            <person name="Chan A.P."/>
            <person name="Thibaud-Nissen F."/>
            <person name="Schobel S."/>
            <person name="Town C.D."/>
        </authorList>
    </citation>
    <scope>GENOME REANNOTATION</scope>
    <source>
        <strain>cv. Columbia</strain>
    </source>
</reference>
<reference key="3">
    <citation type="submission" date="2006-07" db="EMBL/GenBank/DDBJ databases">
        <title>Large-scale analysis of RIKEN Arabidopsis full-length (RAFL) cDNAs.</title>
        <authorList>
            <person name="Totoki Y."/>
            <person name="Seki M."/>
            <person name="Ishida J."/>
            <person name="Nakajima M."/>
            <person name="Enju A."/>
            <person name="Kamiya A."/>
            <person name="Narusaka M."/>
            <person name="Shin-i T."/>
            <person name="Nakagawa M."/>
            <person name="Sakamoto N."/>
            <person name="Oishi K."/>
            <person name="Kohara Y."/>
            <person name="Kobayashi M."/>
            <person name="Toyoda A."/>
            <person name="Sakaki Y."/>
            <person name="Sakurai T."/>
            <person name="Iida K."/>
            <person name="Akiyama K."/>
            <person name="Satou M."/>
            <person name="Toyoda T."/>
            <person name="Konagaya A."/>
            <person name="Carninci P."/>
            <person name="Kawai J."/>
            <person name="Hayashizaki Y."/>
            <person name="Shinozaki K."/>
        </authorList>
    </citation>
    <scope>NUCLEOTIDE SEQUENCE [LARGE SCALE MRNA]</scope>
    <source>
        <strain>cv. Columbia</strain>
    </source>
</reference>
<organism>
    <name type="scientific">Arabidopsis thaliana</name>
    <name type="common">Mouse-ear cress</name>
    <dbReference type="NCBI Taxonomy" id="3702"/>
    <lineage>
        <taxon>Eukaryota</taxon>
        <taxon>Viridiplantae</taxon>
        <taxon>Streptophyta</taxon>
        <taxon>Embryophyta</taxon>
        <taxon>Tracheophyta</taxon>
        <taxon>Spermatophyta</taxon>
        <taxon>Magnoliopsida</taxon>
        <taxon>eudicotyledons</taxon>
        <taxon>Gunneridae</taxon>
        <taxon>Pentapetalae</taxon>
        <taxon>rosids</taxon>
        <taxon>malvids</taxon>
        <taxon>Brassicales</taxon>
        <taxon>Brassicaceae</taxon>
        <taxon>Camelineae</taxon>
        <taxon>Arabidopsis</taxon>
    </lineage>
</organism>
<evidence type="ECO:0000250" key="1"/>
<evidence type="ECO:0000255" key="2"/>
<evidence type="ECO:0000256" key="3">
    <source>
        <dbReference type="SAM" id="MobiDB-lite"/>
    </source>
</evidence>
<evidence type="ECO:0000305" key="4"/>
<protein>
    <recommendedName>
        <fullName>Calcium-transporting ATPase 9, plasma membrane-type</fullName>
        <ecNumber>7.2.2.10</ecNumber>
    </recommendedName>
    <alternativeName>
        <fullName>Ca(2+)-ATPase isoform 9</fullName>
    </alternativeName>
</protein>
<dbReference type="EC" id="7.2.2.10"/>
<dbReference type="EMBL" id="AB023045">
    <property type="protein sequence ID" value="BAB01709.1"/>
    <property type="status" value="ALT_INIT"/>
    <property type="molecule type" value="Genomic_DNA"/>
</dbReference>
<dbReference type="EMBL" id="CP002686">
    <property type="protein sequence ID" value="AEE76473.1"/>
    <property type="molecule type" value="Genomic_DNA"/>
</dbReference>
<dbReference type="EMBL" id="AK227228">
    <property type="protein sequence ID" value="BAE99265.1"/>
    <property type="molecule type" value="mRNA"/>
</dbReference>
<dbReference type="RefSeq" id="NP_188755.2">
    <property type="nucleotide sequence ID" value="NM_113013.5"/>
</dbReference>
<dbReference type="SMR" id="Q9LU41"/>
<dbReference type="FunCoup" id="Q9LU41">
    <property type="interactions" value="1835"/>
</dbReference>
<dbReference type="STRING" id="3702.Q9LU41"/>
<dbReference type="TCDB" id="3.A.3.2.14">
    <property type="family name" value="the p-type atpase (p-atpase) superfamily"/>
</dbReference>
<dbReference type="iPTMnet" id="Q9LU41"/>
<dbReference type="PaxDb" id="3702-AT3G21180.1"/>
<dbReference type="ProteomicsDB" id="244562"/>
<dbReference type="EnsemblPlants" id="AT3G21180.1">
    <property type="protein sequence ID" value="AT3G21180.1"/>
    <property type="gene ID" value="AT3G21180"/>
</dbReference>
<dbReference type="GeneID" id="821671"/>
<dbReference type="Gramene" id="AT3G21180.1">
    <property type="protein sequence ID" value="AT3G21180.1"/>
    <property type="gene ID" value="AT3G21180"/>
</dbReference>
<dbReference type="KEGG" id="ath:AT3G21180"/>
<dbReference type="Araport" id="AT3G21180"/>
<dbReference type="TAIR" id="AT3G21180">
    <property type="gene designation" value="ACA9"/>
</dbReference>
<dbReference type="eggNOG" id="KOG0204">
    <property type="taxonomic scope" value="Eukaryota"/>
</dbReference>
<dbReference type="HOGENOM" id="CLU_002360_3_0_1"/>
<dbReference type="InParanoid" id="Q9LU41"/>
<dbReference type="OMA" id="IQHCKRA"/>
<dbReference type="PhylomeDB" id="Q9LU41"/>
<dbReference type="BioCyc" id="ARA:AT3G21180-MONOMER"/>
<dbReference type="PRO" id="PR:Q9LU41"/>
<dbReference type="Proteomes" id="UP000006548">
    <property type="component" value="Chromosome 3"/>
</dbReference>
<dbReference type="ExpressionAtlas" id="Q9LU41">
    <property type="expression patterns" value="baseline and differential"/>
</dbReference>
<dbReference type="GO" id="GO:0016020">
    <property type="term" value="C:membrane"/>
    <property type="evidence" value="ECO:0007005"/>
    <property type="project" value="TAIR"/>
</dbReference>
<dbReference type="GO" id="GO:0005886">
    <property type="term" value="C:plasma membrane"/>
    <property type="evidence" value="ECO:0000314"/>
    <property type="project" value="TAIR"/>
</dbReference>
<dbReference type="GO" id="GO:0005524">
    <property type="term" value="F:ATP binding"/>
    <property type="evidence" value="ECO:0007669"/>
    <property type="project" value="UniProtKB-KW"/>
</dbReference>
<dbReference type="GO" id="GO:0016887">
    <property type="term" value="F:ATP hydrolysis activity"/>
    <property type="evidence" value="ECO:0007669"/>
    <property type="project" value="InterPro"/>
</dbReference>
<dbReference type="GO" id="GO:0005516">
    <property type="term" value="F:calmodulin binding"/>
    <property type="evidence" value="ECO:0000314"/>
    <property type="project" value="TAIR"/>
</dbReference>
<dbReference type="GO" id="GO:0046872">
    <property type="term" value="F:metal ion binding"/>
    <property type="evidence" value="ECO:0007669"/>
    <property type="project" value="UniProtKB-KW"/>
</dbReference>
<dbReference type="GO" id="GO:0005388">
    <property type="term" value="F:P-type calcium transporter activity"/>
    <property type="evidence" value="ECO:0000314"/>
    <property type="project" value="TAIR"/>
</dbReference>
<dbReference type="GO" id="GO:0009567">
    <property type="term" value="P:double fertilization forming a zygote and endosperm"/>
    <property type="evidence" value="ECO:0000315"/>
    <property type="project" value="TAIR"/>
</dbReference>
<dbReference type="GO" id="GO:0009555">
    <property type="term" value="P:pollen development"/>
    <property type="evidence" value="ECO:0000315"/>
    <property type="project" value="TAIR"/>
</dbReference>
<dbReference type="CDD" id="cd02081">
    <property type="entry name" value="P-type_ATPase_Ca_PMCA-like"/>
    <property type="match status" value="1"/>
</dbReference>
<dbReference type="FunFam" id="1.20.1110.10:FF:000036">
    <property type="entry name" value="Calcium-transporting ATPase"/>
    <property type="match status" value="1"/>
</dbReference>
<dbReference type="FunFam" id="1.20.1110.10:FF:000039">
    <property type="entry name" value="Calcium-transporting ATPase"/>
    <property type="match status" value="1"/>
</dbReference>
<dbReference type="FunFam" id="1.20.5.170:FF:000029">
    <property type="entry name" value="Calcium-transporting ATPase"/>
    <property type="match status" value="1"/>
</dbReference>
<dbReference type="FunFam" id="2.70.150.10:FF:000006">
    <property type="entry name" value="Calcium-transporting ATPase"/>
    <property type="match status" value="1"/>
</dbReference>
<dbReference type="FunFam" id="3.40.1110.10:FF:000013">
    <property type="entry name" value="Calcium-transporting ATPase"/>
    <property type="match status" value="1"/>
</dbReference>
<dbReference type="FunFam" id="3.40.50.1000:FF:000011">
    <property type="entry name" value="Calcium-transporting ATPase"/>
    <property type="match status" value="1"/>
</dbReference>
<dbReference type="FunFam" id="1.20.1110.10:FF:000097">
    <property type="entry name" value="Calcium-transporting ATPase 9 plasma membrane-type"/>
    <property type="match status" value="1"/>
</dbReference>
<dbReference type="Gene3D" id="1.20.5.170">
    <property type="match status" value="1"/>
</dbReference>
<dbReference type="Gene3D" id="3.40.1110.10">
    <property type="entry name" value="Calcium-transporting ATPase, cytoplasmic domain N"/>
    <property type="match status" value="1"/>
</dbReference>
<dbReference type="Gene3D" id="2.70.150.10">
    <property type="entry name" value="Calcium-transporting ATPase, cytoplasmic transduction domain A"/>
    <property type="match status" value="1"/>
</dbReference>
<dbReference type="Gene3D" id="1.20.1110.10">
    <property type="entry name" value="Calcium-transporting ATPase, transmembrane domain"/>
    <property type="match status" value="1"/>
</dbReference>
<dbReference type="Gene3D" id="3.40.50.1000">
    <property type="entry name" value="HAD superfamily/HAD-like"/>
    <property type="match status" value="1"/>
</dbReference>
<dbReference type="InterPro" id="IPR006068">
    <property type="entry name" value="ATPase_P-typ_cation-transptr_C"/>
</dbReference>
<dbReference type="InterPro" id="IPR004014">
    <property type="entry name" value="ATPase_P-typ_cation-transptr_N"/>
</dbReference>
<dbReference type="InterPro" id="IPR023299">
    <property type="entry name" value="ATPase_P-typ_cyto_dom_N"/>
</dbReference>
<dbReference type="InterPro" id="IPR018303">
    <property type="entry name" value="ATPase_P-typ_P_site"/>
</dbReference>
<dbReference type="InterPro" id="IPR023298">
    <property type="entry name" value="ATPase_P-typ_TM_dom_sf"/>
</dbReference>
<dbReference type="InterPro" id="IPR008250">
    <property type="entry name" value="ATPase_P-typ_transduc_dom_A_sf"/>
</dbReference>
<dbReference type="InterPro" id="IPR024750">
    <property type="entry name" value="Ca_ATPase_N_dom"/>
</dbReference>
<dbReference type="InterPro" id="IPR036412">
    <property type="entry name" value="HAD-like_sf"/>
</dbReference>
<dbReference type="InterPro" id="IPR023214">
    <property type="entry name" value="HAD_sf"/>
</dbReference>
<dbReference type="InterPro" id="IPR006408">
    <property type="entry name" value="P-type_ATPase_IIB"/>
</dbReference>
<dbReference type="InterPro" id="IPR001757">
    <property type="entry name" value="P_typ_ATPase"/>
</dbReference>
<dbReference type="InterPro" id="IPR044492">
    <property type="entry name" value="P_typ_ATPase_HD_dom"/>
</dbReference>
<dbReference type="NCBIfam" id="TIGR01517">
    <property type="entry name" value="ATPase-IIB_Ca"/>
    <property type="match status" value="1"/>
</dbReference>
<dbReference type="NCBIfam" id="TIGR01494">
    <property type="entry name" value="ATPase_P-type"/>
    <property type="match status" value="3"/>
</dbReference>
<dbReference type="PANTHER" id="PTHR24093:SF520">
    <property type="entry name" value="CALCIUM-TRANSPORTING ATPASE 9, PLASMA MEMBRANE-TYPE"/>
    <property type="match status" value="1"/>
</dbReference>
<dbReference type="PANTHER" id="PTHR24093">
    <property type="entry name" value="CATION TRANSPORTING ATPASE"/>
    <property type="match status" value="1"/>
</dbReference>
<dbReference type="Pfam" id="PF12515">
    <property type="entry name" value="CaATP_NAI"/>
    <property type="match status" value="1"/>
</dbReference>
<dbReference type="Pfam" id="PF00689">
    <property type="entry name" value="Cation_ATPase_C"/>
    <property type="match status" value="1"/>
</dbReference>
<dbReference type="Pfam" id="PF00690">
    <property type="entry name" value="Cation_ATPase_N"/>
    <property type="match status" value="1"/>
</dbReference>
<dbReference type="Pfam" id="PF00122">
    <property type="entry name" value="E1-E2_ATPase"/>
    <property type="match status" value="1"/>
</dbReference>
<dbReference type="Pfam" id="PF00702">
    <property type="entry name" value="Hydrolase"/>
    <property type="match status" value="1"/>
</dbReference>
<dbReference type="PRINTS" id="PR00119">
    <property type="entry name" value="CATATPASE"/>
</dbReference>
<dbReference type="PRINTS" id="PR00121">
    <property type="entry name" value="NAKATPASE"/>
</dbReference>
<dbReference type="SFLD" id="SFLDS00003">
    <property type="entry name" value="Haloacid_Dehalogenase"/>
    <property type="match status" value="1"/>
</dbReference>
<dbReference type="SFLD" id="SFLDF00027">
    <property type="entry name" value="p-type_atpase"/>
    <property type="match status" value="1"/>
</dbReference>
<dbReference type="SMART" id="SM00831">
    <property type="entry name" value="Cation_ATPase_N"/>
    <property type="match status" value="1"/>
</dbReference>
<dbReference type="SUPFAM" id="SSF81653">
    <property type="entry name" value="Calcium ATPase, transduction domain A"/>
    <property type="match status" value="1"/>
</dbReference>
<dbReference type="SUPFAM" id="SSF81665">
    <property type="entry name" value="Calcium ATPase, transmembrane domain M"/>
    <property type="match status" value="1"/>
</dbReference>
<dbReference type="SUPFAM" id="SSF56784">
    <property type="entry name" value="HAD-like"/>
    <property type="match status" value="1"/>
</dbReference>
<dbReference type="SUPFAM" id="SSF81660">
    <property type="entry name" value="Metal cation-transporting ATPase, ATP-binding domain N"/>
    <property type="match status" value="1"/>
</dbReference>
<dbReference type="PROSITE" id="PS00154">
    <property type="entry name" value="ATPASE_E1_E2"/>
    <property type="match status" value="1"/>
</dbReference>
<sequence length="1086" mass="118768">MSTSSSNGLLLTSMSGRHDDMEAGSAKTEEHSDHEELQHDPDDPFDIDNTKNASVESLRRWRQAALVLNASRRFRYTLDLNKEEHYDNRRRMIRAHAQVIRAALLFKLAGEQQIAFGSSTPAASTGNFDIDLEKLVSMTRNQNMSNLQQYGGVKGVAEKLKSNMEQGINEDEKEVIDRKNAFGSNTYPKKKGKNFFMFLWEAWQDLTLIILIIAAVTSLALGIKTEGLKEGWLDGGSIAFAVLLVIVVTAVSDYRQSLQFQNLNDEKRNIQLEVMRGGRTVKISIYDVVVGDVIPLRIGDQVPADGVLISGHSLAIDESSMTGESKIVHKDQKSPFLMSGCKVADGVGNMLVTGVGINTEWGLLMASISEDTGEETPLQVRLNGLATFIGIVGLSVALVVLVALLVRYFTGTTQDTNGATQFIKGTTSISDIVDDCVKIFTIAVTIVVVAVPEGLPLAVTLTLAYSMRKMMADKALVRRLSACETMGSATTICSDKTGTLTLNQMTVVETYAGGSKMDVADNPSGLHPKLVALISEGVAQNTTGNIFHPKDGGEVEISGSPTEKAILSWAYKLGMKFDTIRSESAIIHAFPFNSEKKRGGVAVLRGDSEVFIHWKGAAEIVLACCTQYMDSNGTLQSIESQKEFFRVAIDSMAKNSLRCVAIACRTQELNQVPKEQEDLDKWALPEDELILLAIVGIKDPCRPGVREAVRICTSAGVKVRMVTGDNLQTAKAIALECGILSSDTEAVEPTIIEGKVFRELSEKEREQVAKKITVMGRSSPNDKLLLVQALRKNGDVVAVTGDGTNDAPALHEADIGLSMGISGTEVAKESSDIIILDDNFASVVKVVRWGRSVYANIQKFIQFQLTVNVAALIINVVAAMSSGDVPLKAVQLLWVNLIMDTLGALALATEPPTDHLMHRTPVGRREPLITNIMWRNLLVQSFYQVAVLLVLNFAGLSILGLNHENHAHAVEVKNTMIFNAFVMCQIFNEFNARKPDEMNVFRGVNKNPLFVAIVGVTFILQIIIVTFLGKFAHTVRLGWQLWLASIIIGLVSWPLAIVGKLIPVPKTPMSVYFKKPFRKYKASRNA</sequence>
<comment type="function">
    <text evidence="1">This magnesium-dependent enzyme catalyzes the hydrolysis of ATP coupled with the translocation of calcium from the cytosol out of the cell or into organelles.</text>
</comment>
<comment type="catalytic activity">
    <reaction>
        <text>Ca(2+)(in) + ATP + H2O = Ca(2+)(out) + ADP + phosphate + H(+)</text>
        <dbReference type="Rhea" id="RHEA:18105"/>
        <dbReference type="ChEBI" id="CHEBI:15377"/>
        <dbReference type="ChEBI" id="CHEBI:15378"/>
        <dbReference type="ChEBI" id="CHEBI:29108"/>
        <dbReference type="ChEBI" id="CHEBI:30616"/>
        <dbReference type="ChEBI" id="CHEBI:43474"/>
        <dbReference type="ChEBI" id="CHEBI:456216"/>
        <dbReference type="EC" id="7.2.2.10"/>
    </reaction>
</comment>
<comment type="activity regulation">
    <text evidence="1">Activated by calmodulin.</text>
</comment>
<comment type="subcellular location">
    <subcellularLocation>
        <location>Membrane</location>
        <topology>Multi-pass membrane protein</topology>
    </subcellularLocation>
</comment>
<comment type="domain">
    <text evidence="1">The N-terminus contains an autoinhibitory calmodulin-binding domain, which binds calmodulin in a calcium-dependent fashion.</text>
</comment>
<comment type="similarity">
    <text evidence="4">Belongs to the cation transport ATPase (P-type) (TC 3.A.3) family. Type IIB subfamily.</text>
</comment>
<comment type="sequence caution" evidence="4">
    <conflict type="erroneous initiation">
        <sequence resource="EMBL-CDS" id="BAB01709"/>
    </conflict>
</comment>
<keyword id="KW-0067">ATP-binding</keyword>
<keyword id="KW-0106">Calcium</keyword>
<keyword id="KW-0109">Calcium transport</keyword>
<keyword id="KW-0112">Calmodulin-binding</keyword>
<keyword id="KW-0406">Ion transport</keyword>
<keyword id="KW-0460">Magnesium</keyword>
<keyword id="KW-0472">Membrane</keyword>
<keyword id="KW-0479">Metal-binding</keyword>
<keyword id="KW-0547">Nucleotide-binding</keyword>
<keyword id="KW-1185">Reference proteome</keyword>
<keyword id="KW-1278">Translocase</keyword>
<keyword id="KW-0812">Transmembrane</keyword>
<keyword id="KW-1133">Transmembrane helix</keyword>
<keyword id="KW-0813">Transport</keyword>
<feature type="chain" id="PRO_0000046415" description="Calcium-transporting ATPase 9, plasma membrane-type">
    <location>
        <begin position="1"/>
        <end position="1086"/>
    </location>
</feature>
<feature type="topological domain" description="Cytoplasmic" evidence="2">
    <location>
        <begin position="1"/>
        <end position="194"/>
    </location>
</feature>
<feature type="transmembrane region" description="Helical" evidence="2">
    <location>
        <begin position="195"/>
        <end position="215"/>
    </location>
</feature>
<feature type="topological domain" description="Lumenal" evidence="2">
    <location>
        <begin position="216"/>
        <end position="233"/>
    </location>
</feature>
<feature type="transmembrane region" description="Helical" evidence="2">
    <location>
        <begin position="234"/>
        <end position="254"/>
    </location>
</feature>
<feature type="topological domain" description="Cytoplasmic" evidence="2">
    <location>
        <begin position="255"/>
        <end position="382"/>
    </location>
</feature>
<feature type="transmembrane region" description="Helical" evidence="2">
    <location>
        <begin position="383"/>
        <end position="402"/>
    </location>
</feature>
<feature type="topological domain" description="Lumenal" evidence="2">
    <location>
        <begin position="403"/>
        <end position="439"/>
    </location>
</feature>
<feature type="transmembrane region" description="Helical" evidence="2">
    <location>
        <begin position="440"/>
        <end position="457"/>
    </location>
</feature>
<feature type="topological domain" description="Cytoplasmic" evidence="2">
    <location>
        <begin position="458"/>
        <end position="857"/>
    </location>
</feature>
<feature type="transmembrane region" description="Helical" evidence="2">
    <location>
        <begin position="858"/>
        <end position="876"/>
    </location>
</feature>
<feature type="topological domain" description="Lumenal" evidence="2">
    <location>
        <begin position="877"/>
        <end position="887"/>
    </location>
</feature>
<feature type="transmembrane region" description="Helical" evidence="2">
    <location>
        <begin position="888"/>
        <end position="908"/>
    </location>
</feature>
<feature type="topological domain" description="Cytoplasmic" evidence="2">
    <location>
        <begin position="909"/>
        <end position="928"/>
    </location>
</feature>
<feature type="transmembrane region" description="Helical" evidence="2">
    <location>
        <begin position="929"/>
        <end position="951"/>
    </location>
</feature>
<feature type="topological domain" description="Lumenal" evidence="2">
    <location>
        <begin position="952"/>
        <end position="963"/>
    </location>
</feature>
<feature type="transmembrane region" description="Helical" evidence="2">
    <location>
        <begin position="964"/>
        <end position="988"/>
    </location>
</feature>
<feature type="topological domain" description="Cytoplasmic" evidence="2">
    <location>
        <begin position="989"/>
        <end position="1006"/>
    </location>
</feature>
<feature type="transmembrane region" description="Helical" evidence="2">
    <location>
        <begin position="1007"/>
        <end position="1028"/>
    </location>
</feature>
<feature type="topological domain" description="Lumenal" evidence="2">
    <location>
        <begin position="1029"/>
        <end position="1038"/>
    </location>
</feature>
<feature type="transmembrane region" description="Helical" evidence="2">
    <location>
        <begin position="1039"/>
        <end position="1060"/>
    </location>
</feature>
<feature type="topological domain" description="Cytoplasmic" evidence="2">
    <location>
        <begin position="1061"/>
        <end position="1086"/>
    </location>
</feature>
<feature type="region of interest" description="Disordered" evidence="3">
    <location>
        <begin position="1"/>
        <end position="50"/>
    </location>
</feature>
<feature type="region of interest" description="Interaction with calmodulin" evidence="1">
    <location>
        <begin position="57"/>
        <end position="68"/>
    </location>
</feature>
<feature type="compositionally biased region" description="Low complexity" evidence="3">
    <location>
        <begin position="1"/>
        <end position="15"/>
    </location>
</feature>
<feature type="compositionally biased region" description="Basic and acidic residues" evidence="3">
    <location>
        <begin position="16"/>
        <end position="42"/>
    </location>
</feature>
<feature type="active site" description="4-aspartylphosphate intermediate" evidence="1">
    <location>
        <position position="495"/>
    </location>
</feature>
<feature type="binding site" evidence="1">
    <location>
        <position position="802"/>
    </location>
    <ligand>
        <name>Mg(2+)</name>
        <dbReference type="ChEBI" id="CHEBI:18420"/>
    </ligand>
</feature>
<feature type="binding site" evidence="1">
    <location>
        <position position="806"/>
    </location>
    <ligand>
        <name>Mg(2+)</name>
        <dbReference type="ChEBI" id="CHEBI:18420"/>
    </ligand>
</feature>
<proteinExistence type="evidence at transcript level"/>
<accession>Q9LU41</accession>
<accession>Q0WUD3</accession>
<name>ACA9_ARATH</name>